<comment type="function">
    <text evidence="1 2">Component of the signal peptidase complex (SPC) which catalyzes the cleavage of N-terminal signal sequences from nascent proteins as they are translocated into the lumen of the endoplasmic reticulum (By similarity). Enhances the enzymatic activity of SPC and facilitates the interactions between different components of the translocation site (By similarity).</text>
</comment>
<comment type="subunit">
    <text evidence="2">Component of the signal peptidase complex (SPC) composed of a catalytic subunit sec11a and three accessory subunits spcs1, spcs2 and spcs3. The complex induces a local thinning of the ER membrane which is used to measure the length of the signal peptide (SP) h-region of protein substrates. This ensures the selectivity of the complex towards h-regions shorter than 18-20 amino acids.</text>
</comment>
<comment type="subcellular location">
    <subcellularLocation>
        <location evidence="3">Endoplasmic reticulum membrane</location>
        <topology evidence="3">Multi-pass membrane protein</topology>
    </subcellularLocation>
</comment>
<comment type="similarity">
    <text evidence="5">Belongs to the SPCS2 family.</text>
</comment>
<dbReference type="EMBL" id="BC091463">
    <property type="protein sequence ID" value="AAH91463.1"/>
    <property type="molecule type" value="mRNA"/>
</dbReference>
<dbReference type="RefSeq" id="NP_001013487.1">
    <property type="nucleotide sequence ID" value="NM_001013469.1"/>
</dbReference>
<dbReference type="SMR" id="Q5BJI9"/>
<dbReference type="BioGRID" id="94995">
    <property type="interactions" value="1"/>
</dbReference>
<dbReference type="FunCoup" id="Q5BJI9">
    <property type="interactions" value="1957"/>
</dbReference>
<dbReference type="STRING" id="7955.ENSDARP00000113444"/>
<dbReference type="PaxDb" id="7955-ENSDARP00000062851"/>
<dbReference type="PeptideAtlas" id="Q5BJI9"/>
<dbReference type="GeneID" id="541342"/>
<dbReference type="KEGG" id="dre:541342"/>
<dbReference type="AGR" id="ZFIN:ZDB-GENE-050320-32"/>
<dbReference type="CTD" id="9789"/>
<dbReference type="ZFIN" id="ZDB-GENE-050320-32">
    <property type="gene designation" value="spcs2"/>
</dbReference>
<dbReference type="eggNOG" id="KOG4072">
    <property type="taxonomic scope" value="Eukaryota"/>
</dbReference>
<dbReference type="InParanoid" id="Q5BJI9"/>
<dbReference type="OrthoDB" id="29558at2759"/>
<dbReference type="PhylomeDB" id="Q5BJI9"/>
<dbReference type="Reactome" id="R-DRE-422085">
    <property type="pathway name" value="Synthesis, secretion, and deacylation of Ghrelin"/>
</dbReference>
<dbReference type="PRO" id="PR:Q5BJI9"/>
<dbReference type="Proteomes" id="UP000000437">
    <property type="component" value="Chromosome 15"/>
</dbReference>
<dbReference type="GO" id="GO:0005787">
    <property type="term" value="C:signal peptidase complex"/>
    <property type="evidence" value="ECO:0000318"/>
    <property type="project" value="GO_Central"/>
</dbReference>
<dbReference type="GO" id="GO:0045047">
    <property type="term" value="P:protein targeting to ER"/>
    <property type="evidence" value="ECO:0000318"/>
    <property type="project" value="GO_Central"/>
</dbReference>
<dbReference type="GO" id="GO:0006465">
    <property type="term" value="P:signal peptide processing"/>
    <property type="evidence" value="ECO:0000318"/>
    <property type="project" value="GO_Central"/>
</dbReference>
<dbReference type="InterPro" id="IPR009582">
    <property type="entry name" value="Spc2/SPCS2"/>
</dbReference>
<dbReference type="PANTHER" id="PTHR13085">
    <property type="entry name" value="MICROSOMAL SIGNAL PEPTIDASE 25 KDA SUBUNIT"/>
    <property type="match status" value="1"/>
</dbReference>
<dbReference type="PANTHER" id="PTHR13085:SF0">
    <property type="entry name" value="SIGNAL PEPTIDASE COMPLEX SUBUNIT 2"/>
    <property type="match status" value="1"/>
</dbReference>
<dbReference type="Pfam" id="PF06703">
    <property type="entry name" value="SPC25"/>
    <property type="match status" value="1"/>
</dbReference>
<protein>
    <recommendedName>
        <fullName>Signal peptidase complex subunit 2</fullName>
    </recommendedName>
    <alternativeName>
        <fullName>Microsomal signal peptidase 25 kDa subunit</fullName>
        <shortName>SPase 25 kDa subunit</shortName>
    </alternativeName>
</protein>
<evidence type="ECO:0000250" key="1">
    <source>
        <dbReference type="UniProtKB" id="Q04969"/>
    </source>
</evidence>
<evidence type="ECO:0000250" key="2">
    <source>
        <dbReference type="UniProtKB" id="Q15005"/>
    </source>
</evidence>
<evidence type="ECO:0000250" key="3">
    <source>
        <dbReference type="UniProtKB" id="Q28250"/>
    </source>
</evidence>
<evidence type="ECO:0000255" key="4"/>
<evidence type="ECO:0000305" key="5"/>
<organism>
    <name type="scientific">Danio rerio</name>
    <name type="common">Zebrafish</name>
    <name type="synonym">Brachydanio rerio</name>
    <dbReference type="NCBI Taxonomy" id="7955"/>
    <lineage>
        <taxon>Eukaryota</taxon>
        <taxon>Metazoa</taxon>
        <taxon>Chordata</taxon>
        <taxon>Craniata</taxon>
        <taxon>Vertebrata</taxon>
        <taxon>Euteleostomi</taxon>
        <taxon>Actinopterygii</taxon>
        <taxon>Neopterygii</taxon>
        <taxon>Teleostei</taxon>
        <taxon>Ostariophysi</taxon>
        <taxon>Cypriniformes</taxon>
        <taxon>Danionidae</taxon>
        <taxon>Danioninae</taxon>
        <taxon>Danio</taxon>
    </lineage>
</organism>
<proteinExistence type="evidence at transcript level"/>
<sequence length="201" mass="23110">MAARNGKNSILEKWRIDEKPVKIDKWDGAAVKNSLDDAAKKVLIEKYGYLESFNLVDGRLFICTVSCLFTIVALIWDYLHPFPESKPVLACCVVSYFIMMGILTLYTSYKEKNIFLVAMQKDPAGMDPDHSWCLSSSLKRFDDQYTLRMSFTDGKTKQSRETEFTKSVSVFFDENGTLVMDQYEKYVSKLHDTLATEKKTK</sequence>
<feature type="chain" id="PRO_0000221162" description="Signal peptidase complex subunit 2">
    <location>
        <begin position="1"/>
        <end position="201"/>
    </location>
</feature>
<feature type="topological domain" description="Cytoplasmic" evidence="3">
    <location>
        <begin position="1"/>
        <end position="59"/>
    </location>
</feature>
<feature type="transmembrane region" description="Helical" evidence="4">
    <location>
        <begin position="60"/>
        <end position="80"/>
    </location>
</feature>
<feature type="topological domain" description="Lumenal" evidence="3">
    <location>
        <begin position="81"/>
        <end position="86"/>
    </location>
</feature>
<feature type="transmembrane region" description="Helical" evidence="4">
    <location>
        <begin position="87"/>
        <end position="107"/>
    </location>
</feature>
<feature type="topological domain" description="Cytoplasmic" evidence="3">
    <location>
        <begin position="108"/>
        <end position="201"/>
    </location>
</feature>
<gene>
    <name type="primary">spcs2</name>
    <name type="ORF">zgc:110364</name>
</gene>
<name>SPCS2_DANRE</name>
<reference key="1">
    <citation type="submission" date="2005-03" db="EMBL/GenBank/DDBJ databases">
        <authorList>
            <consortium name="NIH - Zebrafish Gene Collection (ZGC) project"/>
        </authorList>
    </citation>
    <scope>NUCLEOTIDE SEQUENCE [LARGE SCALE MRNA]</scope>
    <source>
        <tissue>Olfactory epithelium</tissue>
    </source>
</reference>
<accession>Q5BJI9</accession>
<keyword id="KW-0256">Endoplasmic reticulum</keyword>
<keyword id="KW-0472">Membrane</keyword>
<keyword id="KW-1185">Reference proteome</keyword>
<keyword id="KW-0812">Transmembrane</keyword>
<keyword id="KW-1133">Transmembrane helix</keyword>